<evidence type="ECO:0000250" key="1"/>
<evidence type="ECO:0000305" key="2"/>
<comment type="function">
    <text evidence="1">Catalyzes the removal of a penultimate prolyl residue from the N-termini of peptides.</text>
</comment>
<comment type="catalytic activity">
    <reaction>
        <text>Release of any N-terminal amino acid, including proline, that is linked to proline, even from a dipeptide or tripeptide.</text>
        <dbReference type="EC" id="3.4.11.9"/>
    </reaction>
</comment>
<comment type="cofactor">
    <cofactor evidence="1">
        <name>Mn(2+)</name>
        <dbReference type="ChEBI" id="CHEBI:29035"/>
    </cofactor>
    <text evidence="1">Binds 2 manganese ions per subunit.</text>
</comment>
<comment type="similarity">
    <text evidence="2">Belongs to the peptidase M24B family.</text>
</comment>
<proteinExistence type="inferred from homology"/>
<sequence>MMAAVDAILAGKYPAKAHARRVAESLQSYRNGCPGIVYLEAQKTRLIEDNDEPAPFRQRRPFFYLSGCPLPDSCLVYDLSEDQLTLFIPPVDPEDVIWSGLPMSTEEAQNQYDVDRVLVTTELNSTLASIVSSHGGKAIAFTIADQVSESTQFHGFSEVNHSVLKGVIEQSRVVKDEYEVALLRKANDISAKAHIAAIKASQTAVNEREIEGAFIATCIANGAREQSYHPIVACGENGATLHYGKNDDTLIDPVTNQKKRNVLIDAGGEYRTYCADITRVIPVGGKFTAETRQIYDIVLQMQTECIAMLKEGVQWEDVHAHAHRVAIRGLLKLGILRGAEDEIFEKRVSVAFFPHGLGHYLGMDTHDTGGNPNYADKDTMFRYLRVRGRLPAGSVITVEPGVYFCRFIIEPYIKSPESNKYIDTNVLDRYWRVGGVRIEDNVLVTKDGYDNLTTAPKAVDELERLAAS</sequence>
<keyword id="KW-0031">Aminopeptidase</keyword>
<keyword id="KW-0378">Hydrolase</keyword>
<keyword id="KW-0464">Manganese</keyword>
<keyword id="KW-0479">Metal-binding</keyword>
<keyword id="KW-0482">Metalloprotease</keyword>
<keyword id="KW-0645">Protease</keyword>
<keyword id="KW-1185">Reference proteome</keyword>
<accession>Q4X267</accession>
<gene>
    <name type="primary">pepP</name>
    <name type="ORF">AFUA_2G07500</name>
</gene>
<reference key="1">
    <citation type="journal article" date="2005" name="Nature">
        <title>Genomic sequence of the pathogenic and allergenic filamentous fungus Aspergillus fumigatus.</title>
        <authorList>
            <person name="Nierman W.C."/>
            <person name="Pain A."/>
            <person name="Anderson M.J."/>
            <person name="Wortman J.R."/>
            <person name="Kim H.S."/>
            <person name="Arroyo J."/>
            <person name="Berriman M."/>
            <person name="Abe K."/>
            <person name="Archer D.B."/>
            <person name="Bermejo C."/>
            <person name="Bennett J.W."/>
            <person name="Bowyer P."/>
            <person name="Chen D."/>
            <person name="Collins M."/>
            <person name="Coulsen R."/>
            <person name="Davies R."/>
            <person name="Dyer P.S."/>
            <person name="Farman M.L."/>
            <person name="Fedorova N."/>
            <person name="Fedorova N.D."/>
            <person name="Feldblyum T.V."/>
            <person name="Fischer R."/>
            <person name="Fosker N."/>
            <person name="Fraser A."/>
            <person name="Garcia J.L."/>
            <person name="Garcia M.J."/>
            <person name="Goble A."/>
            <person name="Goldman G.H."/>
            <person name="Gomi K."/>
            <person name="Griffith-Jones S."/>
            <person name="Gwilliam R."/>
            <person name="Haas B.J."/>
            <person name="Haas H."/>
            <person name="Harris D.E."/>
            <person name="Horiuchi H."/>
            <person name="Huang J."/>
            <person name="Humphray S."/>
            <person name="Jimenez J."/>
            <person name="Keller N."/>
            <person name="Khouri H."/>
            <person name="Kitamoto K."/>
            <person name="Kobayashi T."/>
            <person name="Konzack S."/>
            <person name="Kulkarni R."/>
            <person name="Kumagai T."/>
            <person name="Lafton A."/>
            <person name="Latge J.-P."/>
            <person name="Li W."/>
            <person name="Lord A."/>
            <person name="Lu C."/>
            <person name="Majoros W.H."/>
            <person name="May G.S."/>
            <person name="Miller B.L."/>
            <person name="Mohamoud Y."/>
            <person name="Molina M."/>
            <person name="Monod M."/>
            <person name="Mouyna I."/>
            <person name="Mulligan S."/>
            <person name="Murphy L.D."/>
            <person name="O'Neil S."/>
            <person name="Paulsen I."/>
            <person name="Penalva M.A."/>
            <person name="Pertea M."/>
            <person name="Price C."/>
            <person name="Pritchard B.L."/>
            <person name="Quail M.A."/>
            <person name="Rabbinowitsch E."/>
            <person name="Rawlins N."/>
            <person name="Rajandream M.A."/>
            <person name="Reichard U."/>
            <person name="Renauld H."/>
            <person name="Robson G.D."/>
            <person name="Rodriguez de Cordoba S."/>
            <person name="Rodriguez-Pena J.M."/>
            <person name="Ronning C.M."/>
            <person name="Rutter S."/>
            <person name="Salzberg S.L."/>
            <person name="Sanchez M."/>
            <person name="Sanchez-Ferrero J.C."/>
            <person name="Saunders D."/>
            <person name="Seeger K."/>
            <person name="Squares R."/>
            <person name="Squares S."/>
            <person name="Takeuchi M."/>
            <person name="Tekaia F."/>
            <person name="Turner G."/>
            <person name="Vazquez de Aldana C.R."/>
            <person name="Weidman J."/>
            <person name="White O."/>
            <person name="Woodward J.R."/>
            <person name="Yu J.-H."/>
            <person name="Fraser C.M."/>
            <person name="Galagan J.E."/>
            <person name="Asai K."/>
            <person name="Machida M."/>
            <person name="Hall N."/>
            <person name="Barrell B.G."/>
            <person name="Denning D.W."/>
        </authorList>
    </citation>
    <scope>NUCLEOTIDE SEQUENCE [LARGE SCALE GENOMIC DNA]</scope>
    <source>
        <strain>ATCC MYA-4609 / CBS 101355 / FGSC A1100 / Af293</strain>
    </source>
</reference>
<organism>
    <name type="scientific">Aspergillus fumigatus (strain ATCC MYA-4609 / CBS 101355 / FGSC A1100 / Af293)</name>
    <name type="common">Neosartorya fumigata</name>
    <dbReference type="NCBI Taxonomy" id="330879"/>
    <lineage>
        <taxon>Eukaryota</taxon>
        <taxon>Fungi</taxon>
        <taxon>Dikarya</taxon>
        <taxon>Ascomycota</taxon>
        <taxon>Pezizomycotina</taxon>
        <taxon>Eurotiomycetes</taxon>
        <taxon>Eurotiomycetidae</taxon>
        <taxon>Eurotiales</taxon>
        <taxon>Aspergillaceae</taxon>
        <taxon>Aspergillus</taxon>
        <taxon>Aspergillus subgen. Fumigati</taxon>
    </lineage>
</organism>
<protein>
    <recommendedName>
        <fullName>Probable Xaa-Pro aminopeptidase pepP</fullName>
        <ecNumber>3.4.11.9</ecNumber>
    </recommendedName>
    <alternativeName>
        <fullName>Aminoacylproline aminopeptidase</fullName>
    </alternativeName>
    <alternativeName>
        <fullName>Prolidase</fullName>
    </alternativeName>
</protein>
<name>AMPP3_ASPFU</name>
<dbReference type="EC" id="3.4.11.9"/>
<dbReference type="EMBL" id="AAHF01000001">
    <property type="protein sequence ID" value="EAL93048.1"/>
    <property type="molecule type" value="Genomic_DNA"/>
</dbReference>
<dbReference type="RefSeq" id="XP_755086.1">
    <property type="nucleotide sequence ID" value="XM_749993.1"/>
</dbReference>
<dbReference type="SMR" id="Q4X267"/>
<dbReference type="FunCoup" id="Q4X267">
    <property type="interactions" value="406"/>
</dbReference>
<dbReference type="STRING" id="330879.Q4X267"/>
<dbReference type="EnsemblFungi" id="EAL93048">
    <property type="protein sequence ID" value="EAL93048"/>
    <property type="gene ID" value="AFUA_2G07500"/>
</dbReference>
<dbReference type="GeneID" id="3513766"/>
<dbReference type="KEGG" id="afm:AFUA_2G07500"/>
<dbReference type="VEuPathDB" id="FungiDB:Afu2g07500"/>
<dbReference type="eggNOG" id="KOG2737">
    <property type="taxonomic scope" value="Eukaryota"/>
</dbReference>
<dbReference type="HOGENOM" id="CLU_017266_1_2_1"/>
<dbReference type="InParanoid" id="Q4X267"/>
<dbReference type="OMA" id="DAHALFF"/>
<dbReference type="OrthoDB" id="10261878at2759"/>
<dbReference type="Proteomes" id="UP000002530">
    <property type="component" value="Chromosome 2"/>
</dbReference>
<dbReference type="GO" id="GO:0030145">
    <property type="term" value="F:manganese ion binding"/>
    <property type="evidence" value="ECO:0007669"/>
    <property type="project" value="InterPro"/>
</dbReference>
<dbReference type="GO" id="GO:0070006">
    <property type="term" value="F:metalloaminopeptidase activity"/>
    <property type="evidence" value="ECO:0007669"/>
    <property type="project" value="InterPro"/>
</dbReference>
<dbReference type="GO" id="GO:0008233">
    <property type="term" value="F:peptidase activity"/>
    <property type="evidence" value="ECO:0000318"/>
    <property type="project" value="GO_Central"/>
</dbReference>
<dbReference type="GO" id="GO:0006508">
    <property type="term" value="P:proteolysis"/>
    <property type="evidence" value="ECO:0000318"/>
    <property type="project" value="GO_Central"/>
</dbReference>
<dbReference type="CDD" id="cd01087">
    <property type="entry name" value="Prolidase"/>
    <property type="match status" value="1"/>
</dbReference>
<dbReference type="FunFam" id="3.90.230.10:FF:000002">
    <property type="entry name" value="Xaa-Pro aminopeptidase 3"/>
    <property type="match status" value="1"/>
</dbReference>
<dbReference type="Gene3D" id="3.90.230.10">
    <property type="entry name" value="Creatinase/methionine aminopeptidase superfamily"/>
    <property type="match status" value="1"/>
</dbReference>
<dbReference type="Gene3D" id="3.40.350.10">
    <property type="entry name" value="Creatinase/prolidase N-terminal domain"/>
    <property type="match status" value="1"/>
</dbReference>
<dbReference type="InterPro" id="IPR007865">
    <property type="entry name" value="Aminopep_P_N"/>
</dbReference>
<dbReference type="InterPro" id="IPR029149">
    <property type="entry name" value="Creatin/AminoP/Spt16_N"/>
</dbReference>
<dbReference type="InterPro" id="IPR036005">
    <property type="entry name" value="Creatinase/aminopeptidase-like"/>
</dbReference>
<dbReference type="InterPro" id="IPR000994">
    <property type="entry name" value="Pept_M24"/>
</dbReference>
<dbReference type="InterPro" id="IPR052433">
    <property type="entry name" value="X-Pro_dipept-like"/>
</dbReference>
<dbReference type="PANTHER" id="PTHR43226">
    <property type="entry name" value="XAA-PRO AMINOPEPTIDASE 3"/>
    <property type="match status" value="1"/>
</dbReference>
<dbReference type="PANTHER" id="PTHR43226:SF1">
    <property type="entry name" value="XAA-PRO DIPEPTIDASE"/>
    <property type="match status" value="1"/>
</dbReference>
<dbReference type="Pfam" id="PF05195">
    <property type="entry name" value="AMP_N"/>
    <property type="match status" value="1"/>
</dbReference>
<dbReference type="Pfam" id="PF00557">
    <property type="entry name" value="Peptidase_M24"/>
    <property type="match status" value="1"/>
</dbReference>
<dbReference type="SMART" id="SM01011">
    <property type="entry name" value="AMP_N"/>
    <property type="match status" value="1"/>
</dbReference>
<dbReference type="SUPFAM" id="SSF55920">
    <property type="entry name" value="Creatinase/aminopeptidase"/>
    <property type="match status" value="1"/>
</dbReference>
<dbReference type="SUPFAM" id="SSF53092">
    <property type="entry name" value="Creatinase/prolidase N-terminal domain"/>
    <property type="match status" value="1"/>
</dbReference>
<feature type="chain" id="PRO_0000411865" description="Probable Xaa-Pro aminopeptidase pepP">
    <location>
        <begin position="1"/>
        <end position="468"/>
    </location>
</feature>
<feature type="binding site" evidence="1">
    <location>
        <position position="265"/>
    </location>
    <ligand>
        <name>Mn(2+)</name>
        <dbReference type="ChEBI" id="CHEBI:29035"/>
        <label>2</label>
    </ligand>
</feature>
<feature type="binding site" evidence="1">
    <location>
        <position position="276"/>
    </location>
    <ligand>
        <name>Mn(2+)</name>
        <dbReference type="ChEBI" id="CHEBI:29035"/>
        <label>1</label>
    </ligand>
</feature>
<feature type="binding site" evidence="1">
    <location>
        <position position="276"/>
    </location>
    <ligand>
        <name>Mn(2+)</name>
        <dbReference type="ChEBI" id="CHEBI:29035"/>
        <label>2</label>
    </ligand>
</feature>
<feature type="binding site" evidence="1">
    <location>
        <position position="399"/>
    </location>
    <ligand>
        <name>Mn(2+)</name>
        <dbReference type="ChEBI" id="CHEBI:29035"/>
        <label>1</label>
    </ligand>
</feature>
<feature type="binding site" evidence="1">
    <location>
        <position position="439"/>
    </location>
    <ligand>
        <name>Mn(2+)</name>
        <dbReference type="ChEBI" id="CHEBI:29035"/>
        <label>1</label>
    </ligand>
</feature>
<feature type="binding site" evidence="1">
    <location>
        <position position="439"/>
    </location>
    <ligand>
        <name>Mn(2+)</name>
        <dbReference type="ChEBI" id="CHEBI:29035"/>
        <label>2</label>
    </ligand>
</feature>